<name>CGGR_BACSU</name>
<sequence>MNQLIQAQKKLLPDLLLVMQKRFEILQYIRLTEPIGRRSLSASLGISERVLRGEVQFLKEQNLVDIKTNGMTLTEEGYELLSVLEDTMKDVLGLTLLEKTLKERLNLKDAIIVSGDSDQSPWVKKEMGRAAVACMKKRFSGKNIVAVTGGTTIEAVAEMMTPDSKNRELLFVPARGGLGEDVKNQANTICAHMAEKASGTYRLLFVPGQLSQGAYSSIIEEPSVKEVLNTIKSASMLVHGIGEAKTMAQRRNTPLEDLKKIDDNDAVTEAFGYYFNADGEVVHKVHSVGMQLDDIDAIPDIIAVAGGSSKAEAIEAYFKKPRNTVLVTDEGAAKKLLRDE</sequence>
<dbReference type="EMBL" id="AL009126">
    <property type="protein sequence ID" value="CAB15400.1"/>
    <property type="molecule type" value="Genomic_DNA"/>
</dbReference>
<dbReference type="PIR" id="C70030">
    <property type="entry name" value="C70030"/>
</dbReference>
<dbReference type="RefSeq" id="NP_391275.1">
    <property type="nucleotide sequence ID" value="NC_000964.3"/>
</dbReference>
<dbReference type="RefSeq" id="WP_009968188.1">
    <property type="nucleotide sequence ID" value="NZ_OZ025638.1"/>
</dbReference>
<dbReference type="PDB" id="2OKG">
    <property type="method" value="X-ray"/>
    <property type="resolution" value="1.65 A"/>
    <property type="chains" value="A/B=89-340"/>
</dbReference>
<dbReference type="PDB" id="3BXE">
    <property type="method" value="X-ray"/>
    <property type="resolution" value="1.80 A"/>
    <property type="chains" value="A/B=89-340"/>
</dbReference>
<dbReference type="PDB" id="3BXF">
    <property type="method" value="X-ray"/>
    <property type="resolution" value="1.70 A"/>
    <property type="chains" value="A/B=89-340"/>
</dbReference>
<dbReference type="PDB" id="3BXG">
    <property type="method" value="X-ray"/>
    <property type="resolution" value="1.80 A"/>
    <property type="chains" value="A/B=89-340"/>
</dbReference>
<dbReference type="PDB" id="3BXH">
    <property type="method" value="X-ray"/>
    <property type="resolution" value="1.85 A"/>
    <property type="chains" value="A/B=89-340"/>
</dbReference>
<dbReference type="PDB" id="7OYK">
    <property type="method" value="X-ray"/>
    <property type="resolution" value="2.10 A"/>
    <property type="chains" value="AAA/BBB/CCC/DDD=1-91"/>
</dbReference>
<dbReference type="PDB" id="8R3G">
    <property type="method" value="EM"/>
    <property type="resolution" value="4.40 A"/>
    <property type="chains" value="A/B/C/D=1-340"/>
</dbReference>
<dbReference type="PDBsum" id="2OKG"/>
<dbReference type="PDBsum" id="3BXE"/>
<dbReference type="PDBsum" id="3BXF"/>
<dbReference type="PDBsum" id="3BXG"/>
<dbReference type="PDBsum" id="3BXH"/>
<dbReference type="PDBsum" id="7OYK"/>
<dbReference type="PDBsum" id="8R3G"/>
<dbReference type="EMDB" id="EMD-18864"/>
<dbReference type="SMR" id="O32253"/>
<dbReference type="FunCoup" id="O32253">
    <property type="interactions" value="48"/>
</dbReference>
<dbReference type="STRING" id="224308.BSU33950"/>
<dbReference type="PaxDb" id="224308-BSU33950"/>
<dbReference type="DNASU" id="938570"/>
<dbReference type="EnsemblBacteria" id="CAB15400">
    <property type="protein sequence ID" value="CAB15400"/>
    <property type="gene ID" value="BSU_33950"/>
</dbReference>
<dbReference type="GeneID" id="938570"/>
<dbReference type="KEGG" id="bsu:BSU33950"/>
<dbReference type="PATRIC" id="fig|224308.179.peg.3681"/>
<dbReference type="eggNOG" id="COG2390">
    <property type="taxonomic scope" value="Bacteria"/>
</dbReference>
<dbReference type="InParanoid" id="O32253"/>
<dbReference type="OrthoDB" id="9793820at2"/>
<dbReference type="PhylomeDB" id="O32253"/>
<dbReference type="BioCyc" id="BSUB:BSU33950-MONOMER"/>
<dbReference type="EvolutionaryTrace" id="O32253"/>
<dbReference type="Proteomes" id="UP000001570">
    <property type="component" value="Chromosome"/>
</dbReference>
<dbReference type="GO" id="GO:0030246">
    <property type="term" value="F:carbohydrate binding"/>
    <property type="evidence" value="ECO:0007669"/>
    <property type="project" value="InterPro"/>
</dbReference>
<dbReference type="GO" id="GO:0000987">
    <property type="term" value="F:cis-regulatory region sequence-specific DNA binding"/>
    <property type="evidence" value="ECO:0000318"/>
    <property type="project" value="GO_Central"/>
</dbReference>
<dbReference type="GO" id="GO:2000142">
    <property type="term" value="P:regulation of DNA-templated transcription initiation"/>
    <property type="evidence" value="ECO:0000318"/>
    <property type="project" value="GO_Central"/>
</dbReference>
<dbReference type="Gene3D" id="3.40.50.1360">
    <property type="match status" value="1"/>
</dbReference>
<dbReference type="Gene3D" id="1.10.10.10">
    <property type="entry name" value="Winged helix-like DNA-binding domain superfamily/Winged helix DNA-binding domain"/>
    <property type="match status" value="1"/>
</dbReference>
<dbReference type="InterPro" id="IPR048715">
    <property type="entry name" value="CggR_N"/>
</dbReference>
<dbReference type="InterPro" id="IPR037171">
    <property type="entry name" value="NagB/RpiA_transferase-like"/>
</dbReference>
<dbReference type="InterPro" id="IPR051054">
    <property type="entry name" value="SorC_transcr_regulators"/>
</dbReference>
<dbReference type="InterPro" id="IPR007324">
    <property type="entry name" value="Sugar-bd_dom_put"/>
</dbReference>
<dbReference type="InterPro" id="IPR036388">
    <property type="entry name" value="WH-like_DNA-bd_sf"/>
</dbReference>
<dbReference type="InterPro" id="IPR036390">
    <property type="entry name" value="WH_DNA-bd_sf"/>
</dbReference>
<dbReference type="PANTHER" id="PTHR34294:SF5">
    <property type="entry name" value="CENTRAL GLYCOLYTIC GENES REGULATOR"/>
    <property type="match status" value="1"/>
</dbReference>
<dbReference type="PANTHER" id="PTHR34294">
    <property type="entry name" value="TRANSCRIPTIONAL REGULATOR-RELATED"/>
    <property type="match status" value="1"/>
</dbReference>
<dbReference type="Pfam" id="PF21715">
    <property type="entry name" value="CggR_N"/>
    <property type="match status" value="1"/>
</dbReference>
<dbReference type="Pfam" id="PF04198">
    <property type="entry name" value="Sugar-bind"/>
    <property type="match status" value="1"/>
</dbReference>
<dbReference type="SUPFAM" id="SSF100950">
    <property type="entry name" value="NagB/RpiA/CoA transferase-like"/>
    <property type="match status" value="1"/>
</dbReference>
<dbReference type="SUPFAM" id="SSF46785">
    <property type="entry name" value="Winged helix' DNA-binding domain"/>
    <property type="match status" value="1"/>
</dbReference>
<comment type="function">
    <text evidence="2 3 8">In the absence of glucose, represses the transcription of the gapA operon, which encodes five key glycolytic enzymes. Binds specifically to the cggR-gapA promoter region and blocks the progression of the RNA polymerase, leading to the arrest of the transcription.</text>
</comment>
<comment type="activity regulation">
    <text evidence="3 4 5 6 7 8">Stability and function are regulated by the effector molecule fructose-1,6-bisphosphate (FBP). In the presence of glucose, binding of FBP to the low-affinity sugar-binding site of CggR disrupts dimer/dimer bridging interactions and triggers a tetramer to dimer transition, which leaves two physically independent dimers on the target DNA and allows transcription of the downstream coding sequences by the RNA polymerase. In addition, FBP and several other phosphorylated compounds can bind to a high-affinity binding-site and protect CggR against aggregation and proteolysis.</text>
</comment>
<comment type="subunit">
    <text evidence="4 7 8">Homotetramer. Binds primarily as a dimer to each half-site of the full-length operator, with much higher affinity for the right site. Then, both dimers interact, bridging the two-half sites of the operator region.</text>
</comment>
<comment type="domain">
    <text evidence="5 6 7">Contains an N-terminal DNA-binding domain and a large C-terminal effector-binding domain. Contains two distinct sugar-binding sites with different affinities.</text>
</comment>
<comment type="similarity">
    <text evidence="9">Belongs to the SorC transcriptional regulatory family.</text>
</comment>
<evidence type="ECO:0000255" key="1"/>
<evidence type="ECO:0000269" key="2">
    <source>
    </source>
</evidence>
<evidence type="ECO:0000269" key="3">
    <source>
    </source>
</evidence>
<evidence type="ECO:0000269" key="4">
    <source>
    </source>
</evidence>
<evidence type="ECO:0000269" key="5">
    <source>
    </source>
</evidence>
<evidence type="ECO:0000269" key="6">
    <source>
    </source>
</evidence>
<evidence type="ECO:0000269" key="7">
    <source>
    </source>
</evidence>
<evidence type="ECO:0000269" key="8">
    <source>
    </source>
</evidence>
<evidence type="ECO:0000305" key="9"/>
<evidence type="ECO:0007744" key="10">
    <source>
        <dbReference type="PDB" id="3BXF"/>
    </source>
</evidence>
<evidence type="ECO:0007829" key="11">
    <source>
        <dbReference type="PDB" id="2OKG"/>
    </source>
</evidence>
<evidence type="ECO:0007829" key="12">
    <source>
        <dbReference type="PDB" id="3BXE"/>
    </source>
</evidence>
<evidence type="ECO:0007829" key="13">
    <source>
        <dbReference type="PDB" id="3BXF"/>
    </source>
</evidence>
<protein>
    <recommendedName>
        <fullName>Central glycolytic genes regulator</fullName>
    </recommendedName>
</protein>
<proteinExistence type="evidence at protein level"/>
<reference key="1">
    <citation type="journal article" date="1997" name="Nature">
        <title>The complete genome sequence of the Gram-positive bacterium Bacillus subtilis.</title>
        <authorList>
            <person name="Kunst F."/>
            <person name="Ogasawara N."/>
            <person name="Moszer I."/>
            <person name="Albertini A.M."/>
            <person name="Alloni G."/>
            <person name="Azevedo V."/>
            <person name="Bertero M.G."/>
            <person name="Bessieres P."/>
            <person name="Bolotin A."/>
            <person name="Borchert S."/>
            <person name="Borriss R."/>
            <person name="Boursier L."/>
            <person name="Brans A."/>
            <person name="Braun M."/>
            <person name="Brignell S.C."/>
            <person name="Bron S."/>
            <person name="Brouillet S."/>
            <person name="Bruschi C.V."/>
            <person name="Caldwell B."/>
            <person name="Capuano V."/>
            <person name="Carter N.M."/>
            <person name="Choi S.-K."/>
            <person name="Codani J.-J."/>
            <person name="Connerton I.F."/>
            <person name="Cummings N.J."/>
            <person name="Daniel R.A."/>
            <person name="Denizot F."/>
            <person name="Devine K.M."/>
            <person name="Duesterhoeft A."/>
            <person name="Ehrlich S.D."/>
            <person name="Emmerson P.T."/>
            <person name="Entian K.-D."/>
            <person name="Errington J."/>
            <person name="Fabret C."/>
            <person name="Ferrari E."/>
            <person name="Foulger D."/>
            <person name="Fritz C."/>
            <person name="Fujita M."/>
            <person name="Fujita Y."/>
            <person name="Fuma S."/>
            <person name="Galizzi A."/>
            <person name="Galleron N."/>
            <person name="Ghim S.-Y."/>
            <person name="Glaser P."/>
            <person name="Goffeau A."/>
            <person name="Golightly E.J."/>
            <person name="Grandi G."/>
            <person name="Guiseppi G."/>
            <person name="Guy B.J."/>
            <person name="Haga K."/>
            <person name="Haiech J."/>
            <person name="Harwood C.R."/>
            <person name="Henaut A."/>
            <person name="Hilbert H."/>
            <person name="Holsappel S."/>
            <person name="Hosono S."/>
            <person name="Hullo M.-F."/>
            <person name="Itaya M."/>
            <person name="Jones L.-M."/>
            <person name="Joris B."/>
            <person name="Karamata D."/>
            <person name="Kasahara Y."/>
            <person name="Klaerr-Blanchard M."/>
            <person name="Klein C."/>
            <person name="Kobayashi Y."/>
            <person name="Koetter P."/>
            <person name="Koningstein G."/>
            <person name="Krogh S."/>
            <person name="Kumano M."/>
            <person name="Kurita K."/>
            <person name="Lapidus A."/>
            <person name="Lardinois S."/>
            <person name="Lauber J."/>
            <person name="Lazarevic V."/>
            <person name="Lee S.-M."/>
            <person name="Levine A."/>
            <person name="Liu H."/>
            <person name="Masuda S."/>
            <person name="Mauel C."/>
            <person name="Medigue C."/>
            <person name="Medina N."/>
            <person name="Mellado R.P."/>
            <person name="Mizuno M."/>
            <person name="Moestl D."/>
            <person name="Nakai S."/>
            <person name="Noback M."/>
            <person name="Noone D."/>
            <person name="O'Reilly M."/>
            <person name="Ogawa K."/>
            <person name="Ogiwara A."/>
            <person name="Oudega B."/>
            <person name="Park S.-H."/>
            <person name="Parro V."/>
            <person name="Pohl T.M."/>
            <person name="Portetelle D."/>
            <person name="Porwollik S."/>
            <person name="Prescott A.M."/>
            <person name="Presecan E."/>
            <person name="Pujic P."/>
            <person name="Purnelle B."/>
            <person name="Rapoport G."/>
            <person name="Rey M."/>
            <person name="Reynolds S."/>
            <person name="Rieger M."/>
            <person name="Rivolta C."/>
            <person name="Rocha E."/>
            <person name="Roche B."/>
            <person name="Rose M."/>
            <person name="Sadaie Y."/>
            <person name="Sato T."/>
            <person name="Scanlan E."/>
            <person name="Schleich S."/>
            <person name="Schroeter R."/>
            <person name="Scoffone F."/>
            <person name="Sekiguchi J."/>
            <person name="Sekowska A."/>
            <person name="Seror S.J."/>
            <person name="Serror P."/>
            <person name="Shin B.-S."/>
            <person name="Soldo B."/>
            <person name="Sorokin A."/>
            <person name="Tacconi E."/>
            <person name="Takagi T."/>
            <person name="Takahashi H."/>
            <person name="Takemaru K."/>
            <person name="Takeuchi M."/>
            <person name="Tamakoshi A."/>
            <person name="Tanaka T."/>
            <person name="Terpstra P."/>
            <person name="Tognoni A."/>
            <person name="Tosato V."/>
            <person name="Uchiyama S."/>
            <person name="Vandenbol M."/>
            <person name="Vannier F."/>
            <person name="Vassarotti A."/>
            <person name="Viari A."/>
            <person name="Wambutt R."/>
            <person name="Wedler E."/>
            <person name="Wedler H."/>
            <person name="Weitzenegger T."/>
            <person name="Winters P."/>
            <person name="Wipat A."/>
            <person name="Yamamoto H."/>
            <person name="Yamane K."/>
            <person name="Yasumoto K."/>
            <person name="Yata K."/>
            <person name="Yoshida K."/>
            <person name="Yoshikawa H.-F."/>
            <person name="Zumstein E."/>
            <person name="Yoshikawa H."/>
            <person name="Danchin A."/>
        </authorList>
    </citation>
    <scope>NUCLEOTIDE SEQUENCE [LARGE SCALE GENOMIC DNA]</scope>
    <source>
        <strain>168</strain>
    </source>
</reference>
<reference key="2">
    <citation type="journal article" date="2000" name="J. Biol. Chem.">
        <title>Two glyceraldehyde-3-phosphate dehydrogenases with opposite physiological roles in a nonphotosynthetic bacterium.</title>
        <authorList>
            <person name="Fillinger S."/>
            <person name="Boschi-Muller S."/>
            <person name="Azza S."/>
            <person name="Dervyn E."/>
            <person name="Branlant G."/>
            <person name="Aymerich S."/>
        </authorList>
    </citation>
    <scope>FUNCTION</scope>
    <scope>GENE NAME</scope>
</reference>
<reference key="3">
    <citation type="journal article" date="2003" name="Mol. Microbiol.">
        <title>Regulation of the central glycolytic genes in Bacillus subtilis: binding of the repressor CggR to its single DNA target sequence is modulated by fructose-1,6-bisphosphate.</title>
        <authorList>
            <person name="Doan T."/>
            <person name="Aymerich S."/>
        </authorList>
    </citation>
    <scope>FUNCTION</scope>
    <scope>DNA-BINDING</scope>
    <scope>ACTIVITY REGULATION</scope>
    <source>
        <strain>168</strain>
    </source>
</reference>
<reference key="4">
    <citation type="journal article" date="2007" name="Biochemistry">
        <title>Fructose-1,6-bisphosphate acts both as an inducer and as a structural cofactor of the central glycolytic genes repressor (CggR).</title>
        <authorList>
            <person name="Zorrilla S."/>
            <person name="Chaix D."/>
            <person name="Ortega A."/>
            <person name="Alfonso C."/>
            <person name="Doan T."/>
            <person name="Margeat E."/>
            <person name="Rivas G."/>
            <person name="Aymerich S."/>
            <person name="Declerck N."/>
            <person name="Royer C.A."/>
        </authorList>
    </citation>
    <scope>ACTIVITY REGULATION</scope>
    <scope>DOMAIN</scope>
</reference>
<reference key="5">
    <citation type="journal article" date="2007" name="Biophys. J.">
        <title>Inducer-modulated cooperative binding of the tetrameric CggR repressor to operator DNA.</title>
        <authorList>
            <person name="Zorrilla S."/>
            <person name="Doan T."/>
            <person name="Alfonso C."/>
            <person name="Margeat E."/>
            <person name="Ortega A."/>
            <person name="Rivas G."/>
            <person name="Aymerich S."/>
            <person name="Royer C.A."/>
            <person name="Declerck N."/>
        </authorList>
    </citation>
    <scope>DNA-BINDING</scope>
    <scope>ACTIVITY REGULATION</scope>
    <scope>SUBUNIT</scope>
</reference>
<reference key="6">
    <citation type="journal article" date="2010" name="Anal. Chem.">
        <title>Combination of noncovalent mass spectrometry and traveling wave ion mobility spectrometry reveals sugar-induced conformational changes of central glycolytic genes repressor/DNA complex.</title>
        <authorList>
            <person name="Atmanene C."/>
            <person name="Chaix D."/>
            <person name="Bessin Y."/>
            <person name="Declerck N."/>
            <person name="Van Dorsselaer A."/>
            <person name="Sanglier-Cianferani S."/>
        </authorList>
    </citation>
    <scope>ACTIVITY REGULATION</scope>
    <scope>SUBUNIT</scope>
    <scope>DOMAIN</scope>
</reference>
<reference key="7">
    <citation type="journal article" date="2010" name="Nucleic Acids Res.">
        <title>Physical basis of the inducer-dependent cooperativity of the Central glycolytic genes Repressor/DNA complex.</title>
        <authorList>
            <person name="Chaix D."/>
            <person name="Ferguson M.L."/>
            <person name="Atmanene C."/>
            <person name="Van Dorsselaer A."/>
            <person name="Sanglier-Cianferani S."/>
            <person name="Royer C.A."/>
            <person name="Declerck N."/>
        </authorList>
    </citation>
    <scope>FUNCTION</scope>
    <scope>DNA-BINDING</scope>
    <scope>ACTIVITY REGULATION</scope>
    <scope>SUBUNIT</scope>
</reference>
<reference key="8">
    <citation type="journal article" date="2008" name="Mol. Microbiol.">
        <title>Crystal structures of the effector-binding domain of repressor central glycolytic gene regulator from Bacillus subtilis reveal ligand-induced structural changes upon binding of several glycolytic intermediates.</title>
        <authorList>
            <person name="Rezacova P."/>
            <person name="Kozisek M."/>
            <person name="Moy S.F."/>
            <person name="Sieglova I."/>
            <person name="Joachimiak A."/>
            <person name="Machius M."/>
            <person name="Otwinowski Z."/>
        </authorList>
    </citation>
    <scope>X-RAY CRYSTALLOGRAPHY (1.65 ANGSTROMS) OF 89-340 OF APOPROTEIN AND IN COMPLEXES WITH BETA-FRUCTOSE-1,6-BISPHOSPHATE; 1,3-DIHYDROXYACETONEPHOSPHATE; FRUCTOSE-6-PHOSPHATE AND BETA-D-GLUCOSE 6-PHOSPHATE</scope>
    <scope>ACTIVITY REGULATION</scope>
    <scope>DOMAIN</scope>
</reference>
<accession>O32253</accession>
<feature type="chain" id="PRO_0000062787" description="Central glycolytic genes regulator">
    <location>
        <begin position="1"/>
        <end position="340"/>
    </location>
</feature>
<feature type="DNA-binding region" description="H-T-H motif" evidence="1">
    <location>
        <begin position="37"/>
        <end position="56"/>
    </location>
</feature>
<feature type="binding site" evidence="10">
    <location>
        <begin position="149"/>
        <end position="152"/>
    </location>
    <ligand>
        <name>beta-D-fructose 1,6-bisphosphate</name>
        <dbReference type="ChEBI" id="CHEBI:32966"/>
        <note>effector</note>
    </ligand>
</feature>
<feature type="binding site" evidence="10">
    <location>
        <position position="175"/>
    </location>
    <ligand>
        <name>beta-D-fructose 1,6-bisphosphate</name>
        <dbReference type="ChEBI" id="CHEBI:32966"/>
        <note>effector</note>
    </ligand>
</feature>
<feature type="binding site" evidence="10">
    <location>
        <position position="185"/>
    </location>
    <ligand>
        <name>beta-D-fructose 1,6-bisphosphate</name>
        <dbReference type="ChEBI" id="CHEBI:32966"/>
        <note>effector</note>
    </ligand>
</feature>
<feature type="binding site" evidence="10">
    <location>
        <begin position="250"/>
        <end position="251"/>
    </location>
    <ligand>
        <name>beta-D-fructose 1,6-bisphosphate</name>
        <dbReference type="ChEBI" id="CHEBI:32966"/>
        <note>effector</note>
    </ligand>
</feature>
<feature type="binding site" evidence="10">
    <location>
        <position position="269"/>
    </location>
    <ligand>
        <name>beta-D-fructose 1,6-bisphosphate</name>
        <dbReference type="ChEBI" id="CHEBI:32966"/>
        <note>effector</note>
    </ligand>
</feature>
<feature type="binding site" evidence="10">
    <location>
        <position position="310"/>
    </location>
    <ligand>
        <name>beta-D-fructose 1,6-bisphosphate</name>
        <dbReference type="ChEBI" id="CHEBI:32966"/>
        <note>effector</note>
    </ligand>
</feature>
<feature type="helix" evidence="11">
    <location>
        <begin position="94"/>
        <end position="104"/>
    </location>
</feature>
<feature type="strand" evidence="11">
    <location>
        <begin position="108"/>
        <end position="115"/>
    </location>
</feature>
<feature type="turn" evidence="11">
    <location>
        <begin position="117"/>
        <end position="119"/>
    </location>
</feature>
<feature type="helix" evidence="11">
    <location>
        <begin position="122"/>
        <end position="138"/>
    </location>
</feature>
<feature type="strand" evidence="11">
    <location>
        <begin position="141"/>
        <end position="147"/>
    </location>
</feature>
<feature type="helix" evidence="11">
    <location>
        <begin position="151"/>
        <end position="159"/>
    </location>
</feature>
<feature type="strand" evidence="11">
    <location>
        <begin position="168"/>
        <end position="177"/>
    </location>
</feature>
<feature type="strand" evidence="13">
    <location>
        <begin position="179"/>
        <end position="181"/>
    </location>
</feature>
<feature type="helix" evidence="12">
    <location>
        <begin position="182"/>
        <end position="184"/>
    </location>
</feature>
<feature type="helix" evidence="11">
    <location>
        <begin position="185"/>
        <end position="197"/>
    </location>
</feature>
<feature type="helix" evidence="11">
    <location>
        <begin position="212"/>
        <end position="219"/>
    </location>
</feature>
<feature type="helix" evidence="11">
    <location>
        <begin position="222"/>
        <end position="232"/>
    </location>
</feature>
<feature type="strand" evidence="11">
    <location>
        <begin position="235"/>
        <end position="239"/>
    </location>
</feature>
<feature type="helix" evidence="11">
    <location>
        <begin position="244"/>
        <end position="250"/>
    </location>
</feature>
<feature type="helix" evidence="11">
    <location>
        <begin position="255"/>
        <end position="263"/>
    </location>
</feature>
<feature type="strand" evidence="11">
    <location>
        <begin position="266"/>
        <end position="270"/>
    </location>
</feature>
<feature type="strand" evidence="11">
    <location>
        <begin position="273"/>
        <end position="276"/>
    </location>
</feature>
<feature type="strand" evidence="11">
    <location>
        <begin position="281"/>
        <end position="284"/>
    </location>
</feature>
<feature type="strand" evidence="11">
    <location>
        <begin position="286"/>
        <end position="289"/>
    </location>
</feature>
<feature type="helix" evidence="11">
    <location>
        <begin position="292"/>
        <end position="297"/>
    </location>
</feature>
<feature type="strand" evidence="11">
    <location>
        <begin position="299"/>
        <end position="304"/>
    </location>
</feature>
<feature type="helix" evidence="11">
    <location>
        <begin position="308"/>
        <end position="310"/>
    </location>
</feature>
<feature type="helix" evidence="11">
    <location>
        <begin position="311"/>
        <end position="317"/>
    </location>
</feature>
<feature type="strand" evidence="11">
    <location>
        <begin position="324"/>
        <end position="329"/>
    </location>
</feature>
<feature type="helix" evidence="11">
    <location>
        <begin position="330"/>
        <end position="337"/>
    </location>
</feature>
<organism>
    <name type="scientific">Bacillus subtilis (strain 168)</name>
    <dbReference type="NCBI Taxonomy" id="224308"/>
    <lineage>
        <taxon>Bacteria</taxon>
        <taxon>Bacillati</taxon>
        <taxon>Bacillota</taxon>
        <taxon>Bacilli</taxon>
        <taxon>Bacillales</taxon>
        <taxon>Bacillaceae</taxon>
        <taxon>Bacillus</taxon>
    </lineage>
</organism>
<keyword id="KW-0002">3D-structure</keyword>
<keyword id="KW-0238">DNA-binding</keyword>
<keyword id="KW-1185">Reference proteome</keyword>
<keyword id="KW-0678">Repressor</keyword>
<keyword id="KW-0804">Transcription</keyword>
<keyword id="KW-0805">Transcription regulation</keyword>
<gene>
    <name type="primary">cggR</name>
    <name type="synonym">yvbQ</name>
    <name type="ordered locus">BSU33950</name>
</gene>